<gene>
    <name type="primary">traQ</name>
    <name type="ordered locus">ECOK12F094</name>
</gene>
<sequence>MISKRRFSLPRLDITGMWVFSLGVWFHIVARLVYSKPWMAFFLAELIAAILVLFGAYQVLDAWIARVSREEREALEARQQAMMEGQQEGGHVSH</sequence>
<accession>P18033</accession>
<comment type="function">
    <text evidence="4">Required for efficient expression of pilin. Functions as a transient chaperone for propilin, preventing it from being prematurely degraded, and also promotes propilin translocation, positioning it in the membrane for processing to mature pilin.</text>
</comment>
<comment type="subunit">
    <text evidence="2 3">Interacts with pilin.</text>
</comment>
<comment type="subcellular location">
    <subcellularLocation>
        <location evidence="6">Cell inner membrane</location>
        <topology evidence="5">Multi-pass membrane protein</topology>
    </subcellularLocation>
</comment>
<organism>
    <name type="scientific">Escherichia coli (strain K12)</name>
    <dbReference type="NCBI Taxonomy" id="83333"/>
    <lineage>
        <taxon>Bacteria</taxon>
        <taxon>Pseudomonadati</taxon>
        <taxon>Pseudomonadota</taxon>
        <taxon>Gammaproteobacteria</taxon>
        <taxon>Enterobacterales</taxon>
        <taxon>Enterobacteriaceae</taxon>
        <taxon>Escherichia</taxon>
    </lineage>
</organism>
<feature type="chain" id="PRO_0000068475" description="Protein TraQ">
    <location>
        <begin position="1"/>
        <end position="94"/>
    </location>
</feature>
<feature type="transmembrane region" description="Helical" evidence="1">
    <location>
        <begin position="14"/>
        <end position="34"/>
    </location>
</feature>
<feature type="transmembrane region" description="Helical" evidence="1">
    <location>
        <begin position="37"/>
        <end position="57"/>
    </location>
</feature>
<reference key="1">
    <citation type="journal article" date="1989" name="J. Bacteriol.">
        <title>Nucleotide sequence of traQ and adjacent loci in the Escherichia coli K-12 F-plasmid transfer operon.</title>
        <authorList>
            <person name="Wu J.H."/>
            <person name="Ippen-Ihler K."/>
        </authorList>
    </citation>
    <scope>NUCLEOTIDE SEQUENCE [GENOMIC DNA]</scope>
    <source>
        <strain>K12</strain>
    </source>
</reference>
<reference key="2">
    <citation type="journal article" date="1994" name="Microbiol. Rev.">
        <title>Analysis of the sequence and gene products of the transfer region of the F sex factor.</title>
        <authorList>
            <person name="Frost L.S."/>
            <person name="Ippen-Ihler K."/>
            <person name="Skurray R.A."/>
        </authorList>
    </citation>
    <scope>NUCLEOTIDE SEQUENCE [GENOMIC DNA]</scope>
</reference>
<reference key="3">
    <citation type="submission" date="2000-04" db="EMBL/GenBank/DDBJ databases">
        <title>Complete nucleotide sequence of the F plasmid: its implications for organization and diversification of plasmid genomes.</title>
        <authorList>
            <person name="Shimizu H."/>
            <person name="Saitoh Y."/>
            <person name="Suda Y."/>
            <person name="Uehara K."/>
            <person name="Sampei G."/>
            <person name="Mizobuchi K."/>
        </authorList>
    </citation>
    <scope>NUCLEOTIDE SEQUENCE [LARGE SCALE GENOMIC DNA]</scope>
    <source>
        <strain>K12 / CR63</strain>
    </source>
</reference>
<reference key="4">
    <citation type="journal article" date="1992" name="J. Mol. Biol.">
        <title>Characterization of the F plasmid mating aggregation gene traN and of a new F transfer region locus trbE.</title>
        <authorList>
            <person name="Maneewannakul S."/>
            <person name="Kathir P."/>
            <person name="Ippen-Ihler K."/>
        </authorList>
    </citation>
    <scope>SUBCELLULAR LOCATION</scope>
    <source>
        <strain>K12</strain>
        <plasmid>F</plasmid>
    </source>
</reference>
<reference key="5">
    <citation type="journal article" date="1993" name="J. Bacteriol.">
        <title>Synthesis of F pilin.</title>
        <authorList>
            <person name="Maneewannakul K."/>
            <person name="Maneewannakul S."/>
            <person name="Ippen-Ihler K."/>
        </authorList>
    </citation>
    <scope>INTERACTION WITH PROPILIN</scope>
    <source>
        <plasmid>F</plasmid>
    </source>
</reference>
<reference key="6">
    <citation type="journal article" date="1996" name="Mol. Microbiol.">
        <title>Effects of F-encoded components and F-pilin domains on the synthesis and membrane insertion of TraA'-'PhoA fusion proteins.</title>
        <authorList>
            <person name="Paiva W.D."/>
            <person name="Silverman P.M."/>
        </authorList>
    </citation>
    <scope>FUNCTION IN PROPILIN MATURATION</scope>
    <source>
        <plasmid>F</plasmid>
    </source>
</reference>
<reference key="7">
    <citation type="journal article" date="1999" name="Mol. Microbiol.">
        <title>Interaction between the F plasmid TraA (F-pilin) and TraQ proteins.</title>
        <authorList>
            <person name="Harris R.L."/>
            <person name="Sholl K.A."/>
            <person name="Conrad M.N."/>
            <person name="Dresser M.E."/>
            <person name="Silverman P.M."/>
        </authorList>
    </citation>
    <scope>INTERACTION WITH PROPILIN</scope>
    <source>
        <plasmid>F</plasmid>
    </source>
</reference>
<protein>
    <recommendedName>
        <fullName>Protein TraQ</fullName>
    </recommendedName>
</protein>
<keyword id="KW-0997">Cell inner membrane</keyword>
<keyword id="KW-1003">Cell membrane</keyword>
<keyword id="KW-0184">Conjugation</keyword>
<keyword id="KW-0472">Membrane</keyword>
<keyword id="KW-0614">Plasmid</keyword>
<keyword id="KW-0812">Transmembrane</keyword>
<keyword id="KW-1133">Transmembrane helix</keyword>
<dbReference type="EMBL" id="M20787">
    <property type="protein sequence ID" value="AAC63070.1"/>
    <property type="molecule type" value="Genomic_DNA"/>
</dbReference>
<dbReference type="EMBL" id="U01159">
    <property type="protein sequence ID" value="AAC44194.1"/>
    <property type="molecule type" value="Genomic_DNA"/>
</dbReference>
<dbReference type="EMBL" id="AP001918">
    <property type="protein sequence ID" value="BAA97964.1"/>
    <property type="molecule type" value="Genomic_DNA"/>
</dbReference>
<dbReference type="PIR" id="D32238">
    <property type="entry name" value="BVECAQ"/>
</dbReference>
<dbReference type="RefSeq" id="NP_061473.1">
    <property type="nucleotide sequence ID" value="NC_002483.1"/>
</dbReference>
<dbReference type="RefSeq" id="NP_862939.1">
    <property type="nucleotide sequence ID" value="NC_004998.1"/>
</dbReference>
<dbReference type="RefSeq" id="WP_000624109.1">
    <property type="nucleotide sequence ID" value="NZ_JACEFS010000047.1"/>
</dbReference>
<dbReference type="RefSeq" id="YP_006953815.1">
    <property type="nucleotide sequence ID" value="NC_019089.1"/>
</dbReference>
<dbReference type="RefSeq" id="YP_008826456.1">
    <property type="nucleotide sequence ID" value="NC_022885.1"/>
</dbReference>
<dbReference type="RefSeq" id="YP_009066498.1">
    <property type="nucleotide sequence ID" value="NC_025106.1"/>
</dbReference>
<dbReference type="RefSeq" id="YP_009068330.1">
    <property type="nucleotide sequence ID" value="NC_025139.1"/>
</dbReference>
<dbReference type="RefSeq" id="YP_009070595.1">
    <property type="nucleotide sequence ID" value="NC_025175.1"/>
</dbReference>
<dbReference type="RefSeq" id="YP_009071251.1">
    <property type="nucleotide sequence ID" value="NC_025179.1"/>
</dbReference>
<dbReference type="DIP" id="DIP-27655N"/>
<dbReference type="IntAct" id="P18033">
    <property type="interactions" value="1"/>
</dbReference>
<dbReference type="KEGG" id="ecoc:C3026_24570"/>
<dbReference type="PATRIC" id="fig|83333.107.peg.618"/>
<dbReference type="OrthoDB" id="6636873at2"/>
<dbReference type="PRO" id="PR:P18033"/>
<dbReference type="GO" id="GO:0005886">
    <property type="term" value="C:plasma membrane"/>
    <property type="evidence" value="ECO:0007669"/>
    <property type="project" value="UniProtKB-SubCell"/>
</dbReference>
<dbReference type="InterPro" id="IPR014112">
    <property type="entry name" value="TraQ_proteobacteria"/>
</dbReference>
<dbReference type="NCBIfam" id="NF010287">
    <property type="entry name" value="PRK13727.1"/>
    <property type="match status" value="1"/>
</dbReference>
<dbReference type="NCBIfam" id="TIGR02741">
    <property type="entry name" value="TraQ"/>
    <property type="match status" value="1"/>
</dbReference>
<dbReference type="Pfam" id="PF09679">
    <property type="entry name" value="TraQ"/>
    <property type="match status" value="1"/>
</dbReference>
<dbReference type="PIRSF" id="PIRSF003265">
    <property type="entry name" value="TraQ"/>
    <property type="match status" value="1"/>
</dbReference>
<proteinExistence type="evidence at protein level"/>
<geneLocation type="plasmid">
    <name>F</name>
</geneLocation>
<name>TRAQ_ECOLI</name>
<evidence type="ECO:0000255" key="1"/>
<evidence type="ECO:0000269" key="2">
    <source>
    </source>
</evidence>
<evidence type="ECO:0000269" key="3">
    <source>
    </source>
</evidence>
<evidence type="ECO:0000269" key="4">
    <source>
    </source>
</evidence>
<evidence type="ECO:0000305" key="5"/>
<evidence type="ECO:0000305" key="6">
    <source>
    </source>
</evidence>